<sequence>MNKGIERSVSVVLGAQWGDEGKGKLVDLLSESSTVVCRCQGGNNAGHTVVAGGKEYFFHLLPSGIINPNVLAIIGNGVVVNLEALFQEINEAVNKGLLDVASRLRISDRCHLVFPLHQEIDRMEEELRGLNLLGTTKKGIGPAYSSKVTRNGLRVCDLIGDWDQFTAKYKELVNYVKRRYPALEINVEESLEQLKTYREMLSGMVCDSVLLINKLTESKQTKILVEGAQSCMLDIDFGTYPHVTSSNCSIGGVCTGLGLSPSRVGSVYGVIKAYTTRVGSGPFPTELLDGIGEYIQKKGNEWGVTTKRMRRIGWLDTVVIRYAHIINDFNALALTKIDVLDGLKEVKIARAYVDPETGNELSSFPADPFILSRVVVIYETLPGWKASTQNCRVYDELPPAAKTFIETVEKLLNIPIRWIGTGASRDSIIIRSV</sequence>
<evidence type="ECO:0000250" key="1"/>
<evidence type="ECO:0000255" key="2">
    <source>
        <dbReference type="HAMAP-Rule" id="MF_03125"/>
    </source>
</evidence>
<comment type="function">
    <text evidence="1">Plays an important role in the de novo pathway and in the salvage pathway of purine nucleotide biosynthesis. Catalyzes the first committed step in the biosynthesis of AMP from IMP (By similarity).</text>
</comment>
<comment type="catalytic activity">
    <reaction evidence="2">
        <text>IMP + L-aspartate + GTP = N(6)-(1,2-dicarboxyethyl)-AMP + GDP + phosphate + 2 H(+)</text>
        <dbReference type="Rhea" id="RHEA:15753"/>
        <dbReference type="ChEBI" id="CHEBI:15378"/>
        <dbReference type="ChEBI" id="CHEBI:29991"/>
        <dbReference type="ChEBI" id="CHEBI:37565"/>
        <dbReference type="ChEBI" id="CHEBI:43474"/>
        <dbReference type="ChEBI" id="CHEBI:57567"/>
        <dbReference type="ChEBI" id="CHEBI:58053"/>
        <dbReference type="ChEBI" id="CHEBI:58189"/>
        <dbReference type="EC" id="6.3.4.4"/>
    </reaction>
</comment>
<comment type="cofactor">
    <cofactor evidence="2">
        <name>Mg(2+)</name>
        <dbReference type="ChEBI" id="CHEBI:18420"/>
    </cofactor>
    <text evidence="2">Binds 1 Mg(2+) ion per subunit.</text>
</comment>
<comment type="pathway">
    <text evidence="2">Purine metabolism; AMP biosynthesis via de novo pathway; AMP from IMP: step 1/2.</text>
</comment>
<comment type="subunit">
    <text evidence="2">Homodimer.</text>
</comment>
<comment type="subcellular location">
    <subcellularLocation>
        <location evidence="2">Cytoplasm</location>
    </subcellularLocation>
</comment>
<comment type="similarity">
    <text evidence="2">Belongs to the adenylosuccinate synthetase family.</text>
</comment>
<accession>Q5D8V5</accession>
<keyword id="KW-0963">Cytoplasm</keyword>
<keyword id="KW-0342">GTP-binding</keyword>
<keyword id="KW-0436">Ligase</keyword>
<keyword id="KW-0460">Magnesium</keyword>
<keyword id="KW-0479">Metal-binding</keyword>
<keyword id="KW-0547">Nucleotide-binding</keyword>
<keyword id="KW-0658">Purine biosynthesis</keyword>
<organism>
    <name type="scientific">Schistosoma japonicum</name>
    <name type="common">Blood fluke</name>
    <dbReference type="NCBI Taxonomy" id="6182"/>
    <lineage>
        <taxon>Eukaryota</taxon>
        <taxon>Metazoa</taxon>
        <taxon>Spiralia</taxon>
        <taxon>Lophotrochozoa</taxon>
        <taxon>Platyhelminthes</taxon>
        <taxon>Trematoda</taxon>
        <taxon>Digenea</taxon>
        <taxon>Strigeidida</taxon>
        <taxon>Schistosomatoidea</taxon>
        <taxon>Schistosomatidae</taxon>
        <taxon>Schistosoma</taxon>
    </lineage>
</organism>
<reference key="1">
    <citation type="journal article" date="2006" name="PLoS Pathog.">
        <title>New perspectives on host-parasite interplay by comparative transcriptomic and proteomic analyses of Schistosoma japonicum.</title>
        <authorList>
            <person name="Liu F."/>
            <person name="Lu J."/>
            <person name="Hu W."/>
            <person name="Wang S.-Y."/>
            <person name="Cui S.-J."/>
            <person name="Chi M."/>
            <person name="Yan Q."/>
            <person name="Wang X.-R."/>
            <person name="Song H.-D."/>
            <person name="Xu X.-N."/>
            <person name="Wang J.-J."/>
            <person name="Zhang X.-L."/>
            <person name="Zhang X."/>
            <person name="Wang Z.-Q."/>
            <person name="Xue C.-L."/>
            <person name="Brindley P.J."/>
            <person name="McManus D.P."/>
            <person name="Yang P.-Y."/>
            <person name="Feng Z."/>
            <person name="Chen Z."/>
            <person name="Han Z.-G."/>
        </authorList>
    </citation>
    <scope>NUCLEOTIDE SEQUENCE [LARGE SCALE MRNA]</scope>
</reference>
<dbReference type="EC" id="6.3.4.4" evidence="2"/>
<dbReference type="EMBL" id="AY816019">
    <property type="protein sequence ID" value="AAW27751.1"/>
    <property type="molecule type" value="mRNA"/>
</dbReference>
<dbReference type="SMR" id="Q5D8V5"/>
<dbReference type="OrthoDB" id="10265645at2759"/>
<dbReference type="UniPathway" id="UPA00075">
    <property type="reaction ID" value="UER00335"/>
</dbReference>
<dbReference type="GO" id="GO:0005737">
    <property type="term" value="C:cytoplasm"/>
    <property type="evidence" value="ECO:0007669"/>
    <property type="project" value="UniProtKB-SubCell"/>
</dbReference>
<dbReference type="GO" id="GO:0004019">
    <property type="term" value="F:adenylosuccinate synthase activity"/>
    <property type="evidence" value="ECO:0007669"/>
    <property type="project" value="UniProtKB-UniRule"/>
</dbReference>
<dbReference type="GO" id="GO:0005525">
    <property type="term" value="F:GTP binding"/>
    <property type="evidence" value="ECO:0007669"/>
    <property type="project" value="UniProtKB-UniRule"/>
</dbReference>
<dbReference type="GO" id="GO:0000287">
    <property type="term" value="F:magnesium ion binding"/>
    <property type="evidence" value="ECO:0007669"/>
    <property type="project" value="UniProtKB-UniRule"/>
</dbReference>
<dbReference type="GO" id="GO:0044208">
    <property type="term" value="P:'de novo' AMP biosynthetic process"/>
    <property type="evidence" value="ECO:0007669"/>
    <property type="project" value="UniProtKB-UniRule"/>
</dbReference>
<dbReference type="GO" id="GO:0046040">
    <property type="term" value="P:IMP metabolic process"/>
    <property type="evidence" value="ECO:0007669"/>
    <property type="project" value="TreeGrafter"/>
</dbReference>
<dbReference type="CDD" id="cd03108">
    <property type="entry name" value="AdSS"/>
    <property type="match status" value="1"/>
</dbReference>
<dbReference type="FunFam" id="3.90.170.10:FF:000001">
    <property type="entry name" value="Adenylosuccinate synthetase"/>
    <property type="match status" value="1"/>
</dbReference>
<dbReference type="FunFam" id="1.10.300.10:FF:000002">
    <property type="entry name" value="Adenylosuccinate synthetase, chloroplastic"/>
    <property type="match status" value="1"/>
</dbReference>
<dbReference type="Gene3D" id="3.40.440.10">
    <property type="entry name" value="Adenylosuccinate Synthetase, subunit A, domain 1"/>
    <property type="match status" value="1"/>
</dbReference>
<dbReference type="Gene3D" id="1.10.300.10">
    <property type="entry name" value="Adenylosuccinate Synthetase, subunit A, domain 2"/>
    <property type="match status" value="1"/>
</dbReference>
<dbReference type="Gene3D" id="3.90.170.10">
    <property type="entry name" value="Adenylosuccinate Synthetase, subunit A, domain 3"/>
    <property type="match status" value="1"/>
</dbReference>
<dbReference type="HAMAP" id="MF_00011">
    <property type="entry name" value="Adenylosucc_synth"/>
    <property type="match status" value="1"/>
</dbReference>
<dbReference type="InterPro" id="IPR018220">
    <property type="entry name" value="Adenylosuccin_syn_GTP-bd"/>
</dbReference>
<dbReference type="InterPro" id="IPR033128">
    <property type="entry name" value="Adenylosuccin_syn_Lys_AS"/>
</dbReference>
<dbReference type="InterPro" id="IPR042109">
    <property type="entry name" value="Adenylosuccinate_synth_dom1"/>
</dbReference>
<dbReference type="InterPro" id="IPR042110">
    <property type="entry name" value="Adenylosuccinate_synth_dom2"/>
</dbReference>
<dbReference type="InterPro" id="IPR042111">
    <property type="entry name" value="Adenylosuccinate_synth_dom3"/>
</dbReference>
<dbReference type="InterPro" id="IPR001114">
    <property type="entry name" value="Adenylosuccinate_synthetase"/>
</dbReference>
<dbReference type="InterPro" id="IPR027417">
    <property type="entry name" value="P-loop_NTPase"/>
</dbReference>
<dbReference type="NCBIfam" id="NF002223">
    <property type="entry name" value="PRK01117.1"/>
    <property type="match status" value="1"/>
</dbReference>
<dbReference type="NCBIfam" id="TIGR00184">
    <property type="entry name" value="purA"/>
    <property type="match status" value="1"/>
</dbReference>
<dbReference type="PANTHER" id="PTHR11846">
    <property type="entry name" value="ADENYLOSUCCINATE SYNTHETASE"/>
    <property type="match status" value="1"/>
</dbReference>
<dbReference type="PANTHER" id="PTHR11846:SF0">
    <property type="entry name" value="ADENYLOSUCCINATE SYNTHETASE"/>
    <property type="match status" value="1"/>
</dbReference>
<dbReference type="Pfam" id="PF00709">
    <property type="entry name" value="Adenylsucc_synt"/>
    <property type="match status" value="1"/>
</dbReference>
<dbReference type="SMART" id="SM00788">
    <property type="entry name" value="Adenylsucc_synt"/>
    <property type="match status" value="1"/>
</dbReference>
<dbReference type="SUPFAM" id="SSF52540">
    <property type="entry name" value="P-loop containing nucleoside triphosphate hydrolases"/>
    <property type="match status" value="1"/>
</dbReference>
<dbReference type="PROSITE" id="PS01266">
    <property type="entry name" value="ADENYLOSUCCIN_SYN_1"/>
    <property type="match status" value="1"/>
</dbReference>
<dbReference type="PROSITE" id="PS00513">
    <property type="entry name" value="ADENYLOSUCCIN_SYN_2"/>
    <property type="match status" value="1"/>
</dbReference>
<feature type="chain" id="PRO_0000399270" description="Adenylosuccinate synthetase">
    <location>
        <begin position="1"/>
        <end position="433"/>
    </location>
</feature>
<feature type="active site" description="Proton acceptor" evidence="2">
    <location>
        <position position="19"/>
    </location>
</feature>
<feature type="active site" description="Proton donor" evidence="2">
    <location>
        <position position="47"/>
    </location>
</feature>
<feature type="binding site" evidence="2">
    <location>
        <begin position="18"/>
        <end position="24"/>
    </location>
    <ligand>
        <name>GTP</name>
        <dbReference type="ChEBI" id="CHEBI:37565"/>
    </ligand>
</feature>
<feature type="binding site" description="in other chain" evidence="2">
    <location>
        <begin position="19"/>
        <end position="22"/>
    </location>
    <ligand>
        <name>IMP</name>
        <dbReference type="ChEBI" id="CHEBI:58053"/>
        <note>ligand shared between dimeric partners</note>
    </ligand>
</feature>
<feature type="binding site" evidence="2">
    <location>
        <position position="19"/>
    </location>
    <ligand>
        <name>Mg(2+)</name>
        <dbReference type="ChEBI" id="CHEBI:18420"/>
    </ligand>
</feature>
<feature type="binding site" description="in other chain" evidence="2">
    <location>
        <begin position="44"/>
        <end position="47"/>
    </location>
    <ligand>
        <name>IMP</name>
        <dbReference type="ChEBI" id="CHEBI:58053"/>
        <note>ligand shared between dimeric partners</note>
    </ligand>
</feature>
<feature type="binding site" evidence="2">
    <location>
        <begin position="46"/>
        <end position="48"/>
    </location>
    <ligand>
        <name>GTP</name>
        <dbReference type="ChEBI" id="CHEBI:37565"/>
    </ligand>
</feature>
<feature type="binding site" evidence="2">
    <location>
        <position position="46"/>
    </location>
    <ligand>
        <name>Mg(2+)</name>
        <dbReference type="ChEBI" id="CHEBI:18420"/>
    </ligand>
</feature>
<feature type="binding site" description="in other chain" evidence="2">
    <location>
        <position position="136"/>
    </location>
    <ligand>
        <name>IMP</name>
        <dbReference type="ChEBI" id="CHEBI:58053"/>
        <note>ligand shared between dimeric partners</note>
    </ligand>
</feature>
<feature type="binding site" evidence="2">
    <location>
        <position position="150"/>
    </location>
    <ligand>
        <name>IMP</name>
        <dbReference type="ChEBI" id="CHEBI:58053"/>
        <note>ligand shared between dimeric partners</note>
    </ligand>
</feature>
<feature type="binding site" description="in other chain" evidence="2">
    <location>
        <position position="229"/>
    </location>
    <ligand>
        <name>IMP</name>
        <dbReference type="ChEBI" id="CHEBI:58053"/>
        <note>ligand shared between dimeric partners</note>
    </ligand>
</feature>
<feature type="binding site" description="in other chain" evidence="2">
    <location>
        <position position="244"/>
    </location>
    <ligand>
        <name>IMP</name>
        <dbReference type="ChEBI" id="CHEBI:58053"/>
        <note>ligand shared between dimeric partners</note>
    </ligand>
</feature>
<feature type="binding site" evidence="2">
    <location>
        <begin position="304"/>
        <end position="310"/>
    </location>
    <ligand>
        <name>substrate</name>
    </ligand>
</feature>
<feature type="binding site" description="in other chain" evidence="2">
    <location>
        <position position="308"/>
    </location>
    <ligand>
        <name>IMP</name>
        <dbReference type="ChEBI" id="CHEBI:58053"/>
        <note>ligand shared between dimeric partners</note>
    </ligand>
</feature>
<feature type="binding site" evidence="2">
    <location>
        <position position="310"/>
    </location>
    <ligand>
        <name>GTP</name>
        <dbReference type="ChEBI" id="CHEBI:37565"/>
    </ligand>
</feature>
<feature type="binding site" evidence="2">
    <location>
        <begin position="336"/>
        <end position="338"/>
    </location>
    <ligand>
        <name>GTP</name>
        <dbReference type="ChEBI" id="CHEBI:37565"/>
    </ligand>
</feature>
<feature type="binding site" evidence="2">
    <location>
        <begin position="420"/>
        <end position="422"/>
    </location>
    <ligand>
        <name>GTP</name>
        <dbReference type="ChEBI" id="CHEBI:37565"/>
    </ligand>
</feature>
<name>PURA_SCHJA</name>
<proteinExistence type="evidence at transcript level"/>
<protein>
    <recommendedName>
        <fullName evidence="2">Adenylosuccinate synthetase</fullName>
        <shortName evidence="2">AMPSase</shortName>
        <shortName evidence="2">AdSS</shortName>
        <ecNumber evidence="2">6.3.4.4</ecNumber>
    </recommendedName>
    <alternativeName>
        <fullName evidence="2">IMP--aspartate ligase</fullName>
    </alternativeName>
</protein>